<name>SYDC_YEAST</name>
<evidence type="ECO:0000250" key="1"/>
<evidence type="ECO:0000256" key="2">
    <source>
        <dbReference type="SAM" id="MobiDB-lite"/>
    </source>
</evidence>
<evidence type="ECO:0000269" key="3">
    <source>
    </source>
</evidence>
<evidence type="ECO:0000269" key="4">
    <source>
    </source>
</evidence>
<evidence type="ECO:0000269" key="5">
    <source>
    </source>
</evidence>
<evidence type="ECO:0000269" key="6">
    <source>
    </source>
</evidence>
<evidence type="ECO:0000305" key="7"/>
<evidence type="ECO:0007744" key="8">
    <source>
    </source>
</evidence>
<evidence type="ECO:0007744" key="9">
    <source>
    </source>
</evidence>
<evidence type="ECO:0007744" key="10">
    <source>
    </source>
</evidence>
<evidence type="ECO:0007744" key="11">
    <source>
    </source>
</evidence>
<evidence type="ECO:0007829" key="12">
    <source>
        <dbReference type="PDB" id="1ASY"/>
    </source>
</evidence>
<evidence type="ECO:0007829" key="13">
    <source>
        <dbReference type="PDB" id="1ASZ"/>
    </source>
</evidence>
<evidence type="ECO:0007829" key="14">
    <source>
        <dbReference type="PDB" id="1EOV"/>
    </source>
</evidence>
<dbReference type="EC" id="6.1.1.12"/>
<dbReference type="EMBL" id="X03606">
    <property type="protein sequence ID" value="CAA27269.1"/>
    <property type="molecule type" value="Genomic_DNA"/>
</dbReference>
<dbReference type="EMBL" id="X06665">
    <property type="protein sequence ID" value="CAA29865.1"/>
    <property type="molecule type" value="Genomic_DNA"/>
</dbReference>
<dbReference type="EMBL" id="X97560">
    <property type="protein sequence ID" value="CAA66172.1"/>
    <property type="molecule type" value="Genomic_DNA"/>
</dbReference>
<dbReference type="EMBL" id="Z73123">
    <property type="protein sequence ID" value="CAA97464.1"/>
    <property type="molecule type" value="Genomic_DNA"/>
</dbReference>
<dbReference type="EMBL" id="Z73122">
    <property type="protein sequence ID" value="CAA97463.1"/>
    <property type="molecule type" value="Genomic_DNA"/>
</dbReference>
<dbReference type="EMBL" id="X91488">
    <property type="protein sequence ID" value="CAA62772.1"/>
    <property type="molecule type" value="Genomic_DNA"/>
</dbReference>
<dbReference type="EMBL" id="BK006945">
    <property type="protein sequence ID" value="DAA09302.1"/>
    <property type="molecule type" value="Genomic_DNA"/>
</dbReference>
<dbReference type="PIR" id="A23508">
    <property type="entry name" value="SYBYDC"/>
</dbReference>
<dbReference type="RefSeq" id="NP_013083.1">
    <property type="nucleotide sequence ID" value="NM_001181838.1"/>
</dbReference>
<dbReference type="PDB" id="1ASY">
    <property type="method" value="X-ray"/>
    <property type="resolution" value="2.90 A"/>
    <property type="chains" value="A/B=68-557"/>
</dbReference>
<dbReference type="PDB" id="1ASZ">
    <property type="method" value="X-ray"/>
    <property type="resolution" value="3.00 A"/>
    <property type="chains" value="A/B=68-557"/>
</dbReference>
<dbReference type="PDB" id="1EOV">
    <property type="method" value="X-ray"/>
    <property type="resolution" value="2.30 A"/>
    <property type="chains" value="A=71-557"/>
</dbReference>
<dbReference type="PDBsum" id="1ASY"/>
<dbReference type="PDBsum" id="1ASZ"/>
<dbReference type="PDBsum" id="1EOV"/>
<dbReference type="SMR" id="P04802"/>
<dbReference type="BioGRID" id="31235">
    <property type="interactions" value="157"/>
</dbReference>
<dbReference type="DIP" id="DIP-4093N"/>
<dbReference type="FunCoup" id="P04802">
    <property type="interactions" value="1483"/>
</dbReference>
<dbReference type="IntAct" id="P04802">
    <property type="interactions" value="78"/>
</dbReference>
<dbReference type="MINT" id="P04802"/>
<dbReference type="STRING" id="4932.YLL018C"/>
<dbReference type="CarbonylDB" id="P04802"/>
<dbReference type="GlyGen" id="P04802">
    <property type="glycosylation" value="2 sites, 1 O-linked glycan (2 sites)"/>
</dbReference>
<dbReference type="iPTMnet" id="P04802"/>
<dbReference type="PaxDb" id="4932-YLL018C"/>
<dbReference type="PeptideAtlas" id="P04802"/>
<dbReference type="EnsemblFungi" id="YLL018C_mRNA">
    <property type="protein sequence ID" value="YLL018C"/>
    <property type="gene ID" value="YLL018C"/>
</dbReference>
<dbReference type="GeneID" id="850643"/>
<dbReference type="KEGG" id="sce:YLL018C"/>
<dbReference type="AGR" id="SGD:S000003941"/>
<dbReference type="SGD" id="S000003941">
    <property type="gene designation" value="DPS1"/>
</dbReference>
<dbReference type="VEuPathDB" id="FungiDB:YLL018C"/>
<dbReference type="eggNOG" id="KOG0556">
    <property type="taxonomic scope" value="Eukaryota"/>
</dbReference>
<dbReference type="GeneTree" id="ENSGT01030000234618"/>
<dbReference type="HOGENOM" id="CLU_004553_2_1_1"/>
<dbReference type="InParanoid" id="P04802"/>
<dbReference type="OMA" id="WVHEIRD"/>
<dbReference type="OrthoDB" id="372395at2759"/>
<dbReference type="BioCyc" id="YEAST:G3O-32123-MONOMER"/>
<dbReference type="BRENDA" id="6.1.1.12">
    <property type="organism ID" value="984"/>
</dbReference>
<dbReference type="SABIO-RK" id="P04802"/>
<dbReference type="BioGRID-ORCS" id="850643">
    <property type="hits" value="1 hit in 10 CRISPR screens"/>
</dbReference>
<dbReference type="EvolutionaryTrace" id="P04802"/>
<dbReference type="PRO" id="PR:P04802"/>
<dbReference type="Proteomes" id="UP000002311">
    <property type="component" value="Chromosome XII"/>
</dbReference>
<dbReference type="RNAct" id="P04802">
    <property type="molecule type" value="protein"/>
</dbReference>
<dbReference type="GO" id="GO:0017101">
    <property type="term" value="C:aminoacyl-tRNA synthetase multienzyme complex"/>
    <property type="evidence" value="ECO:0000318"/>
    <property type="project" value="GO_Central"/>
</dbReference>
<dbReference type="GO" id="GO:0005737">
    <property type="term" value="C:cytoplasm"/>
    <property type="evidence" value="ECO:0000314"/>
    <property type="project" value="SGD"/>
</dbReference>
<dbReference type="GO" id="GO:0005829">
    <property type="term" value="C:cytosol"/>
    <property type="evidence" value="ECO:0000318"/>
    <property type="project" value="GO_Central"/>
</dbReference>
<dbReference type="GO" id="GO:0005634">
    <property type="term" value="C:nucleus"/>
    <property type="evidence" value="ECO:0000314"/>
    <property type="project" value="SGD"/>
</dbReference>
<dbReference type="GO" id="GO:0004815">
    <property type="term" value="F:aspartate-tRNA ligase activity"/>
    <property type="evidence" value="ECO:0000314"/>
    <property type="project" value="SGD"/>
</dbReference>
<dbReference type="GO" id="GO:0005524">
    <property type="term" value="F:ATP binding"/>
    <property type="evidence" value="ECO:0007669"/>
    <property type="project" value="UniProtKB-KW"/>
</dbReference>
<dbReference type="GO" id="GO:0003723">
    <property type="term" value="F:RNA binding"/>
    <property type="evidence" value="ECO:0000314"/>
    <property type="project" value="SGD"/>
</dbReference>
<dbReference type="GO" id="GO:1990825">
    <property type="term" value="F:sequence-specific mRNA binding"/>
    <property type="evidence" value="ECO:0000314"/>
    <property type="project" value="SGD"/>
</dbReference>
<dbReference type="GO" id="GO:0006422">
    <property type="term" value="P:aspartyl-tRNA aminoacylation"/>
    <property type="evidence" value="ECO:0000314"/>
    <property type="project" value="SGD"/>
</dbReference>
<dbReference type="CDD" id="cd04320">
    <property type="entry name" value="AspRS_cyto_N"/>
    <property type="match status" value="1"/>
</dbReference>
<dbReference type="CDD" id="cd00776">
    <property type="entry name" value="AsxRS_core"/>
    <property type="match status" value="1"/>
</dbReference>
<dbReference type="FunFam" id="3.30.930.10:FF:000013">
    <property type="entry name" value="Aspartate--tRNA ligase, cytoplasmic"/>
    <property type="match status" value="1"/>
</dbReference>
<dbReference type="FunFam" id="2.40.50.140:FF:000132">
    <property type="entry name" value="Aspartyl-tRNA synthetase, cytoplasmic"/>
    <property type="match status" value="1"/>
</dbReference>
<dbReference type="Gene3D" id="3.30.930.10">
    <property type="entry name" value="Bira Bifunctional Protein, Domain 2"/>
    <property type="match status" value="1"/>
</dbReference>
<dbReference type="Gene3D" id="2.40.50.140">
    <property type="entry name" value="Nucleic acid-binding proteins"/>
    <property type="match status" value="1"/>
</dbReference>
<dbReference type="HAMAP" id="MF_02075">
    <property type="entry name" value="Asp_tRNA_synth_type2"/>
    <property type="match status" value="1"/>
</dbReference>
<dbReference type="InterPro" id="IPR004364">
    <property type="entry name" value="Aa-tRNA-synt_II"/>
</dbReference>
<dbReference type="InterPro" id="IPR006195">
    <property type="entry name" value="aa-tRNA-synth_II"/>
</dbReference>
<dbReference type="InterPro" id="IPR045864">
    <property type="entry name" value="aa-tRNA-synth_II/BPL/LPL"/>
</dbReference>
<dbReference type="InterPro" id="IPR004523">
    <property type="entry name" value="Asp-tRNA_synthase_2"/>
</dbReference>
<dbReference type="InterPro" id="IPR002312">
    <property type="entry name" value="Asp/Asn-tRNA-synth_IIb"/>
</dbReference>
<dbReference type="InterPro" id="IPR012340">
    <property type="entry name" value="NA-bd_OB-fold"/>
</dbReference>
<dbReference type="InterPro" id="IPR004365">
    <property type="entry name" value="NA-bd_OB_tRNA"/>
</dbReference>
<dbReference type="NCBIfam" id="TIGR00458">
    <property type="entry name" value="aspS_nondisc"/>
    <property type="match status" value="1"/>
</dbReference>
<dbReference type="NCBIfam" id="NF003483">
    <property type="entry name" value="PRK05159.1"/>
    <property type="match status" value="1"/>
</dbReference>
<dbReference type="PANTHER" id="PTHR43450:SF1">
    <property type="entry name" value="ASPARTATE--TRNA LIGASE, CYTOPLASMIC"/>
    <property type="match status" value="1"/>
</dbReference>
<dbReference type="PANTHER" id="PTHR43450">
    <property type="entry name" value="ASPARTYL-TRNA SYNTHETASE"/>
    <property type="match status" value="1"/>
</dbReference>
<dbReference type="Pfam" id="PF00152">
    <property type="entry name" value="tRNA-synt_2"/>
    <property type="match status" value="1"/>
</dbReference>
<dbReference type="Pfam" id="PF01336">
    <property type="entry name" value="tRNA_anti-codon"/>
    <property type="match status" value="1"/>
</dbReference>
<dbReference type="PRINTS" id="PR01042">
    <property type="entry name" value="TRNASYNTHASP"/>
</dbReference>
<dbReference type="SUPFAM" id="SSF55681">
    <property type="entry name" value="Class II aaRS and biotin synthetases"/>
    <property type="match status" value="1"/>
</dbReference>
<dbReference type="SUPFAM" id="SSF50249">
    <property type="entry name" value="Nucleic acid-binding proteins"/>
    <property type="match status" value="1"/>
</dbReference>
<dbReference type="PROSITE" id="PS50862">
    <property type="entry name" value="AA_TRNA_LIGASE_II"/>
    <property type="match status" value="1"/>
</dbReference>
<gene>
    <name type="primary">DPS1</name>
    <name type="synonym">APS</name>
    <name type="synonym">APS1</name>
    <name type="ordered locus">YLL018C</name>
    <name type="ORF">L1295</name>
</gene>
<comment type="catalytic activity">
    <reaction>
        <text>tRNA(Asp) + L-aspartate + ATP = L-aspartyl-tRNA(Asp) + AMP + diphosphate</text>
        <dbReference type="Rhea" id="RHEA:19649"/>
        <dbReference type="Rhea" id="RHEA-COMP:9660"/>
        <dbReference type="Rhea" id="RHEA-COMP:9678"/>
        <dbReference type="ChEBI" id="CHEBI:29991"/>
        <dbReference type="ChEBI" id="CHEBI:30616"/>
        <dbReference type="ChEBI" id="CHEBI:33019"/>
        <dbReference type="ChEBI" id="CHEBI:78442"/>
        <dbReference type="ChEBI" id="CHEBI:78516"/>
        <dbReference type="ChEBI" id="CHEBI:456215"/>
        <dbReference type="EC" id="6.1.1.12"/>
    </reaction>
</comment>
<comment type="subunit">
    <text>Homodimer.</text>
</comment>
<comment type="subcellular location">
    <subcellularLocation>
        <location>Cytoplasm</location>
    </subcellularLocation>
</comment>
<comment type="miscellaneous">
    <text evidence="3">Present with 5750 molecules/cell in log phase SD medium.</text>
</comment>
<comment type="similarity">
    <text evidence="7">Belongs to the class-II aminoacyl-tRNA synthetase family. Type 2 subfamily.</text>
</comment>
<sequence>MSQDENIVKAVEESAEPAQVILGEDGKPLSKKALKKLQKEQEKQRKKEERALQLEAEREAREKKAAAEDTAKDNYGKLPLIQSRDSDRTGQKRVKFVDLDEAKDSDKEVLFRARVHNTRQQGATLAFLTLRQQASLIQGLVKANKEGTISKNMVKWAGSLNLESIVLVRGIVKKVDEPIKSATVQNLEIHITKIYTISETPEALPILLEDASRSEAEAEAAGLPVVNLDTRLDYRVIDLRTVTNQAIFRIQAGVCELFREYLATKKFTEVHTPKLLGAPSEGGSSVFEVTYFKGKAYLAQSPQFNKQQLIVADFERVYEIGPVFRAENSNTHRHMTEFTGLDMEMAFEEHYHEVLDTLSELFVFIFSELPKRFAHEIELVRKQYPVEEFKLPKDGKMVRLTYKEGIEMLRAAGKEIGDFEDLSTENEKFLGKLVRDKYDTDFYILDKFPLEIRPFYTMPDPANPKYSNSYDFFMRGEEILSGAQRIHDHALLQERMKAHGLSPEDPGLKDYCDGFSYGCPPHAGGGIGLERVVMFYLDLKNIRRASLFPRDPKRLRP</sequence>
<feature type="initiator methionine" description="Removed" evidence="4 6">
    <location>
        <position position="1"/>
    </location>
</feature>
<feature type="chain" id="PRO_0000111014" description="Aspartate--tRNA ligase, cytoplasmic">
    <location>
        <begin position="2"/>
        <end position="557"/>
    </location>
</feature>
<feature type="region of interest" description="Disordered" evidence="2">
    <location>
        <begin position="1"/>
        <end position="74"/>
    </location>
</feature>
<feature type="region of interest" description="Aspartate" evidence="1">
    <location>
        <begin position="303"/>
        <end position="306"/>
    </location>
</feature>
<feature type="compositionally biased region" description="Basic and acidic residues" evidence="2">
    <location>
        <begin position="1"/>
        <end position="12"/>
    </location>
</feature>
<feature type="compositionally biased region" description="Basic and acidic residues" evidence="2">
    <location>
        <begin position="37"/>
        <end position="74"/>
    </location>
</feature>
<feature type="binding site" evidence="1">
    <location>
        <position position="281"/>
    </location>
    <ligand>
        <name>L-aspartate</name>
        <dbReference type="ChEBI" id="CHEBI:29991"/>
    </ligand>
</feature>
<feature type="binding site" evidence="1">
    <location>
        <begin position="325"/>
        <end position="327"/>
    </location>
    <ligand>
        <name>ATP</name>
        <dbReference type="ChEBI" id="CHEBI:30616"/>
    </ligand>
</feature>
<feature type="binding site" evidence="1">
    <location>
        <position position="325"/>
    </location>
    <ligand>
        <name>L-aspartate</name>
        <dbReference type="ChEBI" id="CHEBI:29991"/>
    </ligand>
</feature>
<feature type="binding site" evidence="1">
    <location>
        <begin position="333"/>
        <end position="335"/>
    </location>
    <ligand>
        <name>ATP</name>
        <dbReference type="ChEBI" id="CHEBI:30616"/>
    </ligand>
</feature>
<feature type="binding site" evidence="1">
    <location>
        <position position="478"/>
    </location>
    <ligand>
        <name>ATP</name>
        <dbReference type="ChEBI" id="CHEBI:30616"/>
    </ligand>
</feature>
<feature type="binding site" evidence="1">
    <location>
        <position position="481"/>
    </location>
    <ligand>
        <name>L-aspartate</name>
        <dbReference type="ChEBI" id="CHEBI:29991"/>
    </ligand>
</feature>
<feature type="binding site" evidence="1">
    <location>
        <position position="485"/>
    </location>
    <ligand>
        <name>L-aspartate</name>
        <dbReference type="ChEBI" id="CHEBI:29991"/>
    </ligand>
</feature>
<feature type="binding site" evidence="1">
    <location>
        <begin position="528"/>
        <end position="531"/>
    </location>
    <ligand>
        <name>ATP</name>
        <dbReference type="ChEBI" id="CHEBI:30616"/>
    </ligand>
</feature>
<feature type="modified residue" description="N-acetylserine" evidence="6">
    <location>
        <position position="2"/>
    </location>
</feature>
<feature type="modified residue" description="Phosphoserine" evidence="10">
    <location>
        <position position="14"/>
    </location>
</feature>
<feature type="modified residue" description="Phosphoserine" evidence="9 10 11">
    <location>
        <position position="301"/>
    </location>
</feature>
<feature type="modified residue" description="Phosphoserine" evidence="10 11">
    <location>
        <position position="502"/>
    </location>
</feature>
<feature type="modified residue" description="Phosphoserine" evidence="8">
    <location>
        <position position="546"/>
    </location>
</feature>
<feature type="mutagenesis site" description="Loss of activity; important for dimerization." evidence="5">
    <original>P</original>
    <variation>G</variation>
    <location>
        <position position="273"/>
    </location>
</feature>
<feature type="strand" evidence="14">
    <location>
        <begin position="73"/>
        <end position="77"/>
    </location>
</feature>
<feature type="helix" evidence="14">
    <location>
        <begin position="85"/>
        <end position="87"/>
    </location>
</feature>
<feature type="helix" evidence="14">
    <location>
        <begin position="96"/>
        <end position="98"/>
    </location>
</feature>
<feature type="turn" evidence="14">
    <location>
        <begin position="101"/>
        <end position="106"/>
    </location>
</feature>
<feature type="strand" evidence="14">
    <location>
        <begin position="108"/>
        <end position="120"/>
    </location>
</feature>
<feature type="strand" evidence="14">
    <location>
        <begin position="122"/>
        <end position="132"/>
    </location>
</feature>
<feature type="strand" evidence="14">
    <location>
        <begin position="135"/>
        <end position="142"/>
    </location>
</feature>
<feature type="strand" evidence="14">
    <location>
        <begin position="145"/>
        <end position="149"/>
    </location>
</feature>
<feature type="helix" evidence="14">
    <location>
        <begin position="151"/>
        <end position="157"/>
    </location>
</feature>
<feature type="strand" evidence="14">
    <location>
        <begin position="165"/>
        <end position="174"/>
    </location>
</feature>
<feature type="strand" evidence="14">
    <location>
        <begin position="182"/>
        <end position="198"/>
    </location>
</feature>
<feature type="helix" evidence="14">
    <location>
        <begin position="208"/>
        <end position="211"/>
    </location>
</feature>
<feature type="helix" evidence="14">
    <location>
        <begin position="215"/>
        <end position="220"/>
    </location>
</feature>
<feature type="helix" evidence="14">
    <location>
        <begin position="228"/>
        <end position="233"/>
    </location>
</feature>
<feature type="helix" evidence="14">
    <location>
        <begin position="235"/>
        <end position="238"/>
    </location>
</feature>
<feature type="helix" evidence="14">
    <location>
        <begin position="242"/>
        <end position="264"/>
    </location>
</feature>
<feature type="strand" evidence="14">
    <location>
        <begin position="274"/>
        <end position="278"/>
    </location>
</feature>
<feature type="strand" evidence="14">
    <location>
        <begin position="280"/>
        <end position="284"/>
    </location>
</feature>
<feature type="strand" evidence="14">
    <location>
        <begin position="288"/>
        <end position="291"/>
    </location>
</feature>
<feature type="strand" evidence="14">
    <location>
        <begin position="294"/>
        <end position="298"/>
    </location>
</feature>
<feature type="helix" evidence="14">
    <location>
        <begin position="303"/>
        <end position="311"/>
    </location>
</feature>
<feature type="strand" evidence="14">
    <location>
        <begin position="316"/>
        <end position="324"/>
    </location>
</feature>
<feature type="strand" evidence="13">
    <location>
        <begin position="331"/>
        <end position="333"/>
    </location>
</feature>
<feature type="strand" evidence="14">
    <location>
        <begin position="336"/>
        <end position="346"/>
    </location>
</feature>
<feature type="helix" evidence="14">
    <location>
        <begin position="352"/>
        <end position="372"/>
    </location>
</feature>
<feature type="helix" evidence="14">
    <location>
        <begin position="374"/>
        <end position="383"/>
    </location>
</feature>
<feature type="strand" evidence="12">
    <location>
        <begin position="393"/>
        <end position="395"/>
    </location>
</feature>
<feature type="strand" evidence="14">
    <location>
        <begin position="398"/>
        <end position="401"/>
    </location>
</feature>
<feature type="helix" evidence="14">
    <location>
        <begin position="402"/>
        <end position="411"/>
    </location>
</feature>
<feature type="strand" evidence="12">
    <location>
        <begin position="418"/>
        <end position="420"/>
    </location>
</feature>
<feature type="helix" evidence="14">
    <location>
        <begin position="424"/>
        <end position="437"/>
    </location>
</feature>
<feature type="strand" evidence="14">
    <location>
        <begin position="441"/>
        <end position="446"/>
    </location>
</feature>
<feature type="helix" evidence="14">
    <location>
        <begin position="450"/>
        <end position="452"/>
    </location>
</feature>
<feature type="strand" evidence="13">
    <location>
        <begin position="461"/>
        <end position="463"/>
    </location>
</feature>
<feature type="strand" evidence="14">
    <location>
        <begin position="466"/>
        <end position="474"/>
    </location>
</feature>
<feature type="strand" evidence="14">
    <location>
        <begin position="477"/>
        <end position="485"/>
    </location>
</feature>
<feature type="helix" evidence="14">
    <location>
        <begin position="489"/>
        <end position="498"/>
    </location>
</feature>
<feature type="turn" evidence="14">
    <location>
        <begin position="506"/>
        <end position="508"/>
    </location>
</feature>
<feature type="helix" evidence="14">
    <location>
        <begin position="509"/>
        <end position="515"/>
    </location>
</feature>
<feature type="strand" evidence="14">
    <location>
        <begin position="522"/>
        <end position="528"/>
    </location>
</feature>
<feature type="helix" evidence="14">
    <location>
        <begin position="529"/>
        <end position="536"/>
    </location>
</feature>
<feature type="helix" evidence="14">
    <location>
        <begin position="542"/>
        <end position="545"/>
    </location>
</feature>
<feature type="strand" evidence="12">
    <location>
        <begin position="546"/>
        <end position="548"/>
    </location>
</feature>
<protein>
    <recommendedName>
        <fullName>Aspartate--tRNA ligase, cytoplasmic</fullName>
        <ecNumber>6.1.1.12</ecNumber>
    </recommendedName>
    <alternativeName>
        <fullName>Aspartyl-tRNA synthetase</fullName>
        <shortName>AspRS</shortName>
    </alternativeName>
</protein>
<reference key="1">
    <citation type="journal article" date="1988" name="Nucleic Acids Res.">
        <title>Sequence polymorphisms in the yeast gene encoding aspartyl tRNA synthase.</title>
        <authorList>
            <person name="Reid G.A."/>
        </authorList>
    </citation>
    <scope>NUCLEOTIDE SEQUENCE [GENOMIC DNA]</scope>
    <source>
        <strain>ATCC 204508 / S288c</strain>
    </source>
</reference>
<reference key="2">
    <citation type="journal article" date="1986" name="Nucleic Acids Res.">
        <title>Nucleotide sequence of the gene coding for yeast cytoplasmic aspartyl-tRNA synthetase (APS); mapping of the 5' and 3' termini of AspRS mRNA.</title>
        <authorList>
            <person name="Sellami M."/>
            <person name="Fasiolo F."/>
            <person name="Dirheimer G."/>
            <person name="Ebel J.-P."/>
            <person name="Gangloff J."/>
        </authorList>
    </citation>
    <scope>NUCLEOTIDE SEQUENCE [GENOMIC DNA]</scope>
</reference>
<reference key="3">
    <citation type="journal article" date="1997" name="Yeast">
        <title>The sequence of 32kb on the left arm of yeast chromosome XII reveals six known genes, a new member of the seripauperins family and a new ABC transporter homologous to the human multidrug resistance protein.</title>
        <authorList>
            <person name="Purnelle B."/>
            <person name="Goffeau A."/>
        </authorList>
    </citation>
    <scope>NUCLEOTIDE SEQUENCE [GENOMIC DNA]</scope>
    <source>
        <strain>ATCC 204508 / S288c</strain>
    </source>
</reference>
<reference key="4">
    <citation type="journal article" date="1997" name="Nature">
        <title>The nucleotide sequence of Saccharomyces cerevisiae chromosome XII.</title>
        <authorList>
            <person name="Johnston M."/>
            <person name="Hillier L.W."/>
            <person name="Riles L."/>
            <person name="Albermann K."/>
            <person name="Andre B."/>
            <person name="Ansorge W."/>
            <person name="Benes V."/>
            <person name="Brueckner M."/>
            <person name="Delius H."/>
            <person name="Dubois E."/>
            <person name="Duesterhoeft A."/>
            <person name="Entian K.-D."/>
            <person name="Floeth M."/>
            <person name="Goffeau A."/>
            <person name="Hebling U."/>
            <person name="Heumann K."/>
            <person name="Heuss-Neitzel D."/>
            <person name="Hilbert H."/>
            <person name="Hilger F."/>
            <person name="Kleine K."/>
            <person name="Koetter P."/>
            <person name="Louis E.J."/>
            <person name="Messenguy F."/>
            <person name="Mewes H.-W."/>
            <person name="Miosga T."/>
            <person name="Moestl D."/>
            <person name="Mueller-Auer S."/>
            <person name="Nentwich U."/>
            <person name="Obermaier B."/>
            <person name="Piravandi E."/>
            <person name="Pohl T.M."/>
            <person name="Portetelle D."/>
            <person name="Purnelle B."/>
            <person name="Rechmann S."/>
            <person name="Rieger M."/>
            <person name="Rinke M."/>
            <person name="Rose M."/>
            <person name="Scharfe M."/>
            <person name="Scherens B."/>
            <person name="Scholler P."/>
            <person name="Schwager C."/>
            <person name="Schwarz S."/>
            <person name="Underwood A.P."/>
            <person name="Urrestarazu L.A."/>
            <person name="Vandenbol M."/>
            <person name="Verhasselt P."/>
            <person name="Vierendeels F."/>
            <person name="Voet M."/>
            <person name="Volckaert G."/>
            <person name="Voss H."/>
            <person name="Wambutt R."/>
            <person name="Wedler E."/>
            <person name="Wedler H."/>
            <person name="Zimmermann F.K."/>
            <person name="Zollner A."/>
            <person name="Hani J."/>
            <person name="Hoheisel J.D."/>
        </authorList>
    </citation>
    <scope>NUCLEOTIDE SEQUENCE [LARGE SCALE GENOMIC DNA]</scope>
    <source>
        <strain>ATCC 204508 / S288c</strain>
    </source>
</reference>
<reference key="5">
    <citation type="journal article" date="2014" name="G3 (Bethesda)">
        <title>The reference genome sequence of Saccharomyces cerevisiae: Then and now.</title>
        <authorList>
            <person name="Engel S.R."/>
            <person name="Dietrich F.S."/>
            <person name="Fisk D.G."/>
            <person name="Binkley G."/>
            <person name="Balakrishnan R."/>
            <person name="Costanzo M.C."/>
            <person name="Dwight S.S."/>
            <person name="Hitz B.C."/>
            <person name="Karra K."/>
            <person name="Nash R.S."/>
            <person name="Weng S."/>
            <person name="Wong E.D."/>
            <person name="Lloyd P."/>
            <person name="Skrzypek M.S."/>
            <person name="Miyasato S.R."/>
            <person name="Simison M."/>
            <person name="Cherry J.M."/>
        </authorList>
    </citation>
    <scope>GENOME REANNOTATION</scope>
    <source>
        <strain>ATCC 204508 / S288c</strain>
    </source>
</reference>
<reference key="6">
    <citation type="journal article" date="1985" name="Biochimie">
        <title>The complete amino acid sequence of cytoplasmic aspartyl-tRNA synthetase from Saccharomyces cerevisiae.</title>
        <authorList>
            <person name="Amiri I."/>
            <person name="Mejdoub H."/>
            <person name="Hounwanou N."/>
            <person name="Boulanger Y."/>
            <person name="Reinbolt J."/>
        </authorList>
    </citation>
    <scope>PROTEIN SEQUENCE OF 2-557</scope>
</reference>
<reference key="7">
    <citation type="journal article" date="1996" name="Yeast">
        <title>Sequence analysis of the CEN12 region of Saccharomyces cerevisiae on a 43.7 kb fragment of chromosome XII including an open reading frame homologous to the human cystic fibrosis transmembrane conductance regulator protein CFTR.</title>
        <authorList>
            <person name="Miosga T."/>
            <person name="Zimmermann F.K."/>
        </authorList>
    </citation>
    <scope>NUCLEOTIDE SEQUENCE [GENOMIC DNA] OF 1-81</scope>
    <source>
        <strain>ATCC 90840 / EAY235 / FY23</strain>
    </source>
</reference>
<reference key="8">
    <citation type="journal article" date="1991" name="Biochemistry">
        <title>Identification of structurally and functionally important histidine residues in cytoplasmic aspartyl-tRNA synthetase from Saccharomyces cerevisiae.</title>
        <authorList>
            <person name="Gasparini S."/>
            <person name="Vincendon P."/>
            <person name="Eriani G."/>
            <person name="Gangloff J."/>
            <person name="Boulanger Y."/>
            <person name="Reinbolt J."/>
            <person name="Kern D."/>
        </authorList>
    </citation>
    <scope>PARTIAL PROTEIN SEQUENCE</scope>
    <scope>MUTAGENESIS</scope>
</reference>
<reference key="9">
    <citation type="journal article" date="1993" name="Proc. Natl. Acad. Sci. U.S.A.">
        <title>Role of dimerization in yeast aspartyl-tRNA synthetase and importance of the class II invariant proline.</title>
        <authorList>
            <person name="Eriani G."/>
            <person name="Cavarelli J."/>
            <person name="Martin F."/>
            <person name="Dirheimer G."/>
            <person name="Moras D."/>
            <person name="Gangloff J."/>
        </authorList>
    </citation>
    <scope>MUTAGENESIS OF PRO-273</scope>
</reference>
<reference key="10">
    <citation type="journal article" date="1997" name="Electrophoresis">
        <title>Proteome studies of Saccharomyces cerevisiae: identification and characterization of abundant proteins.</title>
        <authorList>
            <person name="Garrels J.I."/>
            <person name="McLaughlin C.S."/>
            <person name="Warner J.R."/>
            <person name="Futcher B."/>
            <person name="Latter G.I."/>
            <person name="Kobayashi R."/>
            <person name="Schwender B."/>
            <person name="Volpe T."/>
            <person name="Anderson D.S."/>
            <person name="Mesquita-Fuentes R."/>
            <person name="Payne W.E."/>
        </authorList>
    </citation>
    <scope>ACETYLATION AT SER-2</scope>
</reference>
<reference key="11">
    <citation type="journal article" date="2003" name="Nature">
        <title>Global analysis of protein expression in yeast.</title>
        <authorList>
            <person name="Ghaemmaghami S."/>
            <person name="Huh W.-K."/>
            <person name="Bower K."/>
            <person name="Howson R.W."/>
            <person name="Belle A."/>
            <person name="Dephoure N."/>
            <person name="O'Shea E.K."/>
            <person name="Weissman J.S."/>
        </authorList>
    </citation>
    <scope>LEVEL OF PROTEIN EXPRESSION [LARGE SCALE ANALYSIS]</scope>
</reference>
<reference key="12">
    <citation type="journal article" date="2007" name="J. Proteome Res.">
        <title>Large-scale phosphorylation analysis of alpha-factor-arrested Saccharomyces cerevisiae.</title>
        <authorList>
            <person name="Li X."/>
            <person name="Gerber S.A."/>
            <person name="Rudner A.D."/>
            <person name="Beausoleil S.A."/>
            <person name="Haas W."/>
            <person name="Villen J."/>
            <person name="Elias J.E."/>
            <person name="Gygi S.P."/>
        </authorList>
    </citation>
    <scope>PHOSPHORYLATION [LARGE SCALE ANALYSIS] AT SER-301</scope>
    <scope>IDENTIFICATION BY MASS SPECTROMETRY [LARGE SCALE ANALYSIS]</scope>
    <source>
        <strain>ADR376</strain>
    </source>
</reference>
<reference key="13">
    <citation type="journal article" date="2007" name="Proc. Natl. Acad. Sci. U.S.A.">
        <title>Analysis of phosphorylation sites on proteins from Saccharomyces cerevisiae by electron transfer dissociation (ETD) mass spectrometry.</title>
        <authorList>
            <person name="Chi A."/>
            <person name="Huttenhower C."/>
            <person name="Geer L.Y."/>
            <person name="Coon J.J."/>
            <person name="Syka J.E.P."/>
            <person name="Bai D.L."/>
            <person name="Shabanowitz J."/>
            <person name="Burke D.J."/>
            <person name="Troyanskaya O.G."/>
            <person name="Hunt D.F."/>
        </authorList>
    </citation>
    <scope>PHOSPHORYLATION [LARGE SCALE ANALYSIS] AT SER-546</scope>
    <scope>IDENTIFICATION BY MASS SPECTROMETRY [LARGE SCALE ANALYSIS]</scope>
</reference>
<reference key="14">
    <citation type="journal article" date="2008" name="Mol. Cell. Proteomics">
        <title>A multidimensional chromatography technology for in-depth phosphoproteome analysis.</title>
        <authorList>
            <person name="Albuquerque C.P."/>
            <person name="Smolka M.B."/>
            <person name="Payne S.H."/>
            <person name="Bafna V."/>
            <person name="Eng J."/>
            <person name="Zhou H."/>
        </authorList>
    </citation>
    <scope>PHOSPHORYLATION [LARGE SCALE ANALYSIS] AT SER-14; SER-301 AND SER-502</scope>
    <scope>IDENTIFICATION BY MASS SPECTROMETRY [LARGE SCALE ANALYSIS]</scope>
</reference>
<reference key="15">
    <citation type="journal article" date="2009" name="Science">
        <title>Global analysis of Cdk1 substrate phosphorylation sites provides insights into evolution.</title>
        <authorList>
            <person name="Holt L.J."/>
            <person name="Tuch B.B."/>
            <person name="Villen J."/>
            <person name="Johnson A.D."/>
            <person name="Gygi S.P."/>
            <person name="Morgan D.O."/>
        </authorList>
    </citation>
    <scope>PHOSPHORYLATION [LARGE SCALE ANALYSIS] AT SER-301 AND SER-502</scope>
    <scope>IDENTIFICATION BY MASS SPECTROMETRY [LARGE SCALE ANALYSIS]</scope>
</reference>
<reference key="16">
    <citation type="journal article" date="1991" name="Science">
        <title>Class II aminoacyl transfer RNA synthetases: crystal structure of yeast aspartyl-tRNA synthetase complexed with tRNA(Asp).</title>
        <authorList>
            <person name="Ruff M."/>
            <person name="Krishnaswamy S."/>
            <person name="Boeglin M."/>
            <person name="Poterszman A."/>
            <person name="Mitschler A."/>
            <person name="Podjarny A."/>
            <person name="Rees B."/>
            <person name="Thierry J.-C."/>
            <person name="Moras D."/>
        </authorList>
    </citation>
    <scope>X-RAY CRYSTALLOGRAPHY (3.0 ANGSTROMS)</scope>
</reference>
<reference key="17">
    <citation type="journal article" date="1994" name="EMBO J.">
        <title>The active site of yeast aspartyl-tRNA synthetase: structural and functional aspects of the aminoacylation reaction.</title>
        <authorList>
            <person name="Cavarelli J."/>
            <person name="Eriani G."/>
            <person name="Rees B."/>
            <person name="Ruff M."/>
            <person name="Boeglin M."/>
            <person name="Mitschler A."/>
            <person name="Martin F."/>
            <person name="Gangloff J."/>
            <person name="Thierry J.-C."/>
            <person name="Moras D."/>
        </authorList>
    </citation>
    <scope>X-RAY CRYSTALLOGRAPHY (3.0 ANGSTROMS)</scope>
    <scope>MUTAGENESIS</scope>
</reference>
<organism>
    <name type="scientific">Saccharomyces cerevisiae (strain ATCC 204508 / S288c)</name>
    <name type="common">Baker's yeast</name>
    <dbReference type="NCBI Taxonomy" id="559292"/>
    <lineage>
        <taxon>Eukaryota</taxon>
        <taxon>Fungi</taxon>
        <taxon>Dikarya</taxon>
        <taxon>Ascomycota</taxon>
        <taxon>Saccharomycotina</taxon>
        <taxon>Saccharomycetes</taxon>
        <taxon>Saccharomycetales</taxon>
        <taxon>Saccharomycetaceae</taxon>
        <taxon>Saccharomyces</taxon>
    </lineage>
</organism>
<proteinExistence type="evidence at protein level"/>
<accession>P04802</accession>
<accession>D6VXY6</accession>
<keyword id="KW-0002">3D-structure</keyword>
<keyword id="KW-0007">Acetylation</keyword>
<keyword id="KW-0030">Aminoacyl-tRNA synthetase</keyword>
<keyword id="KW-0067">ATP-binding</keyword>
<keyword id="KW-0963">Cytoplasm</keyword>
<keyword id="KW-0903">Direct protein sequencing</keyword>
<keyword id="KW-0436">Ligase</keyword>
<keyword id="KW-0547">Nucleotide-binding</keyword>
<keyword id="KW-0597">Phosphoprotein</keyword>
<keyword id="KW-0648">Protein biosynthesis</keyword>
<keyword id="KW-1185">Reference proteome</keyword>